<reference key="1">
    <citation type="journal article" date="1996" name="EMBO J.">
        <title>p619, a giant protein related to the chromosome condensation regulator RCC1, stimulates guanine nucleotide exchange on ARF1 and Rab proteins.</title>
        <authorList>
            <person name="Rosa J.L."/>
            <person name="Casaroli-Marano R.P."/>
            <person name="Buckler A.J."/>
            <person name="Vilaro S."/>
            <person name="Barbacid M."/>
        </authorList>
    </citation>
    <scope>NUCLEOTIDE SEQUENCE [MRNA]</scope>
    <scope>FUNCTION</scope>
    <scope>SUBCELLULAR LOCATION</scope>
    <scope>TISSUE SPECIFICITY</scope>
    <scope>INTERACTION WITH ARF1</scope>
    <scope>VARIANTS ALA-1696; VAL-2220 AND ASP-3722</scope>
</reference>
<reference key="2">
    <citation type="journal article" date="1996" name="EMBO J.">
        <authorList>
            <person name="Rosa J.L."/>
            <person name="Casaroli-Marano R.P."/>
            <person name="Buckler A.J."/>
            <person name="Vilaro S."/>
            <person name="Barbacid M."/>
        </authorList>
    </citation>
    <scope>ERRATUM OF PUBMED:8861955</scope>
</reference>
<reference key="3">
    <citation type="journal article" date="2006" name="Nature">
        <title>Analysis of the DNA sequence and duplication history of human chromosome 15.</title>
        <authorList>
            <person name="Zody M.C."/>
            <person name="Garber M."/>
            <person name="Sharpe T."/>
            <person name="Young S.K."/>
            <person name="Rowen L."/>
            <person name="O'Neill K."/>
            <person name="Whittaker C.A."/>
            <person name="Kamal M."/>
            <person name="Chang J.L."/>
            <person name="Cuomo C.A."/>
            <person name="Dewar K."/>
            <person name="FitzGerald M.G."/>
            <person name="Kodira C.D."/>
            <person name="Madan A."/>
            <person name="Qin S."/>
            <person name="Yang X."/>
            <person name="Abbasi N."/>
            <person name="Abouelleil A."/>
            <person name="Arachchi H.M."/>
            <person name="Baradarani L."/>
            <person name="Birditt B."/>
            <person name="Bloom S."/>
            <person name="Bloom T."/>
            <person name="Borowsky M.L."/>
            <person name="Burke J."/>
            <person name="Butler J."/>
            <person name="Cook A."/>
            <person name="DeArellano K."/>
            <person name="DeCaprio D."/>
            <person name="Dorris L. III"/>
            <person name="Dors M."/>
            <person name="Eichler E.E."/>
            <person name="Engels R."/>
            <person name="Fahey J."/>
            <person name="Fleetwood P."/>
            <person name="Friedman C."/>
            <person name="Gearin G."/>
            <person name="Hall J.L."/>
            <person name="Hensley G."/>
            <person name="Johnson E."/>
            <person name="Jones C."/>
            <person name="Kamat A."/>
            <person name="Kaur A."/>
            <person name="Locke D.P."/>
            <person name="Madan A."/>
            <person name="Munson G."/>
            <person name="Jaffe D.B."/>
            <person name="Lui A."/>
            <person name="Macdonald P."/>
            <person name="Mauceli E."/>
            <person name="Naylor J.W."/>
            <person name="Nesbitt R."/>
            <person name="Nicol R."/>
            <person name="O'Leary S.B."/>
            <person name="Ratcliffe A."/>
            <person name="Rounsley S."/>
            <person name="She X."/>
            <person name="Sneddon K.M.B."/>
            <person name="Stewart S."/>
            <person name="Sougnez C."/>
            <person name="Stone S.M."/>
            <person name="Topham K."/>
            <person name="Vincent D."/>
            <person name="Wang S."/>
            <person name="Zimmer A.R."/>
            <person name="Birren B.W."/>
            <person name="Hood L."/>
            <person name="Lander E.S."/>
            <person name="Nusbaum C."/>
        </authorList>
    </citation>
    <scope>NUCLEOTIDE SEQUENCE [LARGE SCALE GENOMIC DNA]</scope>
</reference>
<reference key="4">
    <citation type="journal article" date="2004" name="Genome Res.">
        <title>The status, quality, and expansion of the NIH full-length cDNA project: the Mammalian Gene Collection (MGC).</title>
        <authorList>
            <consortium name="The MGC Project Team"/>
        </authorList>
    </citation>
    <scope>NUCLEOTIDE SEQUENCE [LARGE SCALE MRNA] OF 4211-4861</scope>
    <source>
        <tissue>Liver</tissue>
    </source>
</reference>
<reference key="5">
    <citation type="journal article" date="1997" name="Oncogene">
        <title>A giant protein that stimulates guanine nucleotide exchange on ARF1 and Rab proteins forms a cytosolic ternary complex with clathrin and Hsp70.</title>
        <authorList>
            <person name="Rosa J.L."/>
            <person name="Barbacid M."/>
        </authorList>
    </citation>
    <scope>FUNCTION</scope>
    <scope>INTERACTION WITH CLTC</scope>
</reference>
<reference key="6">
    <citation type="journal article" date="2003" name="FEBS Lett.">
        <title>Interaction between HERC1 and M2-type pyruvate kinase.</title>
        <authorList>
            <person name="Garcia-Gonzalo F.R."/>
            <person name="Cruz C."/>
            <person name="Munoz P."/>
            <person name="Mazurek S."/>
            <person name="Eigenbrodt E."/>
            <person name="Ventura F."/>
            <person name="Bartrons R."/>
            <person name="Rosa J.L."/>
        </authorList>
    </citation>
    <scope>SUBCELLULAR LOCATION</scope>
    <scope>INTERACTION WITH PKM</scope>
</reference>
<reference key="7">
    <citation type="journal article" date="2004" name="FEBS Lett.">
        <title>The giant protein HERC1 is recruited to aluminum fluoride-induced actin-rich surface protrusions in HeLa cells.</title>
        <authorList>
            <person name="Garcia-Gonzalo F.R."/>
            <person name="Munoz P."/>
            <person name="Gonzalez E."/>
            <person name="Casaroli-Marano R.P."/>
            <person name="Vilaro S."/>
            <person name="Bartrons R."/>
            <person name="Ventura F."/>
            <person name="Rosa J.L."/>
        </authorList>
    </citation>
    <scope>SUBCELLULAR LOCATION</scope>
</reference>
<reference key="8">
    <citation type="journal article" date="2005" name="FEBS Lett.">
        <title>Requirement of phosphatidylinositol-4,5-bisphosphate for HERC1-mediated guanine nucleotide release from ARF proteins.</title>
        <authorList>
            <person name="Garcia-Gonzalo F.R."/>
            <person name="Bartrons R."/>
            <person name="Ventura F."/>
            <person name="Rosa J.L."/>
        </authorList>
    </citation>
    <scope>FUNCTION</scope>
    <scope>INTERACTION WITH ARF6</scope>
</reference>
<reference key="9">
    <citation type="journal article" date="2006" name="Cell">
        <title>Global, in vivo, and site-specific phosphorylation dynamics in signaling networks.</title>
        <authorList>
            <person name="Olsen J.V."/>
            <person name="Blagoev B."/>
            <person name="Gnad F."/>
            <person name="Macek B."/>
            <person name="Kumar C."/>
            <person name="Mortensen P."/>
            <person name="Mann M."/>
        </authorList>
    </citation>
    <scope>IDENTIFICATION BY MASS SPECTROMETRY [LARGE SCALE ANALYSIS]</scope>
    <source>
        <tissue>Cervix carcinoma</tissue>
    </source>
</reference>
<reference key="10">
    <citation type="journal article" date="2006" name="J. Biol. Chem.">
        <title>TSC1 stabilizes TSC2 by inhibiting the interaction between TSC2 and the HERC1 ubiquitin ligase.</title>
        <authorList>
            <person name="Chong-Kopera H."/>
            <person name="Inoki K."/>
            <person name="Li Y."/>
            <person name="Zhu T."/>
            <person name="Garcia-Gonzalo F.R."/>
            <person name="Rosa J.L."/>
            <person name="Guan K.-L."/>
        </authorList>
    </citation>
    <scope>INTERACTION WITH TSC2</scope>
</reference>
<reference key="11">
    <citation type="journal article" date="2007" name="Science">
        <title>ATM and ATR substrate analysis reveals extensive protein networks responsive to DNA damage.</title>
        <authorList>
            <person name="Matsuoka S."/>
            <person name="Ballif B.A."/>
            <person name="Smogorzewska A."/>
            <person name="McDonald E.R. III"/>
            <person name="Hurov K.E."/>
            <person name="Luo J."/>
            <person name="Bakalarski C.E."/>
            <person name="Zhao Z."/>
            <person name="Solimini N."/>
            <person name="Lerenthal Y."/>
            <person name="Shiloh Y."/>
            <person name="Gygi S.P."/>
            <person name="Elledge S.J."/>
        </authorList>
    </citation>
    <scope>PHOSPHORYLATION [LARGE SCALE ANALYSIS] AT SER-1521</scope>
    <scope>IDENTIFICATION BY MASS SPECTROMETRY [LARGE SCALE ANALYSIS]</scope>
    <source>
        <tissue>Embryonic kidney</tissue>
    </source>
</reference>
<reference key="12">
    <citation type="journal article" date="2008" name="J. Proteome Res.">
        <title>Combining protein-based IMAC, peptide-based IMAC, and MudPIT for efficient phosphoproteomic analysis.</title>
        <authorList>
            <person name="Cantin G.T."/>
            <person name="Yi W."/>
            <person name="Lu B."/>
            <person name="Park S.K."/>
            <person name="Xu T."/>
            <person name="Lee J.-D."/>
            <person name="Yates J.R. III"/>
        </authorList>
    </citation>
    <scope>PHOSPHORYLATION [LARGE SCALE ANALYSIS] AT THR-2701</scope>
    <scope>IDENTIFICATION BY MASS SPECTROMETRY [LARGE SCALE ANALYSIS]</scope>
    <source>
        <tissue>Cervix carcinoma</tissue>
    </source>
</reference>
<reference key="13">
    <citation type="journal article" date="2008" name="Proc. Natl. Acad. Sci. U.S.A.">
        <title>A quantitative atlas of mitotic phosphorylation.</title>
        <authorList>
            <person name="Dephoure N."/>
            <person name="Zhou C."/>
            <person name="Villen J."/>
            <person name="Beausoleil S.A."/>
            <person name="Bakalarski C.E."/>
            <person name="Elledge S.J."/>
            <person name="Gygi S.P."/>
        </authorList>
    </citation>
    <scope>PHOSPHORYLATION [LARGE SCALE ANALYSIS] AT SER-1517; SER-1521; THR-2701; SER-2706 AND SER-2710</scope>
    <scope>IDENTIFICATION BY MASS SPECTROMETRY [LARGE SCALE ANALYSIS]</scope>
    <source>
        <tissue>Cervix carcinoma</tissue>
    </source>
</reference>
<reference key="14">
    <citation type="journal article" date="2009" name="Sci. Signal.">
        <title>Quantitative phosphoproteomic analysis of T cell receptor signaling reveals system-wide modulation of protein-protein interactions.</title>
        <authorList>
            <person name="Mayya V."/>
            <person name="Lundgren D.H."/>
            <person name="Hwang S.-I."/>
            <person name="Rezaul K."/>
            <person name="Wu L."/>
            <person name="Eng J.K."/>
            <person name="Rodionov V."/>
            <person name="Han D.K."/>
        </authorList>
    </citation>
    <scope>PHOSPHORYLATION [LARGE SCALE ANALYSIS] AT SER-1521 AND THR-2701</scope>
    <scope>IDENTIFICATION BY MASS SPECTROMETRY [LARGE SCALE ANALYSIS]</scope>
    <source>
        <tissue>Leukemic T-cell</tissue>
    </source>
</reference>
<reference key="15">
    <citation type="journal article" date="2010" name="Sci. Signal.">
        <title>Quantitative phosphoproteomics reveals widespread full phosphorylation site occupancy during mitosis.</title>
        <authorList>
            <person name="Olsen J.V."/>
            <person name="Vermeulen M."/>
            <person name="Santamaria A."/>
            <person name="Kumar C."/>
            <person name="Miller M.L."/>
            <person name="Jensen L.J."/>
            <person name="Gnad F."/>
            <person name="Cox J."/>
            <person name="Jensen T.S."/>
            <person name="Nigg E.A."/>
            <person name="Brunak S."/>
            <person name="Mann M."/>
        </authorList>
    </citation>
    <scope>PHOSPHORYLATION [LARGE SCALE ANALYSIS] AT SER-4857</scope>
    <scope>IDENTIFICATION BY MASS SPECTROMETRY [LARGE SCALE ANALYSIS]</scope>
    <source>
        <tissue>Cervix carcinoma</tissue>
    </source>
</reference>
<reference key="16">
    <citation type="journal article" date="2011" name="BMC Syst. Biol.">
        <title>Initial characterization of the human central proteome.</title>
        <authorList>
            <person name="Burkard T.R."/>
            <person name="Planyavsky M."/>
            <person name="Kaupe I."/>
            <person name="Breitwieser F.P."/>
            <person name="Buerckstuemmer T."/>
            <person name="Bennett K.L."/>
            <person name="Superti-Furga G."/>
            <person name="Colinge J."/>
        </authorList>
    </citation>
    <scope>IDENTIFICATION BY MASS SPECTROMETRY [LARGE SCALE ANALYSIS]</scope>
</reference>
<reference key="17">
    <citation type="journal article" date="2011" name="Sci. Signal.">
        <title>System-wide temporal characterization of the proteome and phosphoproteome of human embryonic stem cell differentiation.</title>
        <authorList>
            <person name="Rigbolt K.T."/>
            <person name="Prokhorova T.A."/>
            <person name="Akimov V."/>
            <person name="Henningsen J."/>
            <person name="Johansen P.T."/>
            <person name="Kratchmarova I."/>
            <person name="Kassem M."/>
            <person name="Mann M."/>
            <person name="Olsen J.V."/>
            <person name="Blagoev B."/>
        </authorList>
    </citation>
    <scope>PHOSPHORYLATION [LARGE SCALE ANALYSIS] AT SER-1491</scope>
    <scope>IDENTIFICATION BY MASS SPECTROMETRY [LARGE SCALE ANALYSIS]</scope>
</reference>
<reference key="18">
    <citation type="journal article" date="2013" name="J. Proteome Res.">
        <title>Toward a comprehensive characterization of a human cancer cell phosphoproteome.</title>
        <authorList>
            <person name="Zhou H."/>
            <person name="Di Palma S."/>
            <person name="Preisinger C."/>
            <person name="Peng M."/>
            <person name="Polat A.N."/>
            <person name="Heck A.J."/>
            <person name="Mohammed S."/>
        </authorList>
    </citation>
    <scope>PHOSPHORYLATION [LARGE SCALE ANALYSIS] AT SER-1342; SER-1428; SER-1512; SER-1521; SER-2422; THR-2701; SER-2720 AND SER-2723</scope>
    <scope>IDENTIFICATION BY MASS SPECTROMETRY [LARGE SCALE ANALYSIS]</scope>
    <source>
        <tissue>Cervix carcinoma</tissue>
        <tissue>Erythroleukemia</tissue>
    </source>
</reference>
<reference key="19">
    <citation type="journal article" date="2014" name="J. Proteomics">
        <title>An enzyme assisted RP-RPLC approach for in-depth analysis of human liver phosphoproteome.</title>
        <authorList>
            <person name="Bian Y."/>
            <person name="Song C."/>
            <person name="Cheng K."/>
            <person name="Dong M."/>
            <person name="Wang F."/>
            <person name="Huang J."/>
            <person name="Sun D."/>
            <person name="Wang L."/>
            <person name="Ye M."/>
            <person name="Zou H."/>
        </authorList>
    </citation>
    <scope>PHOSPHORYLATION [LARGE SCALE ANALYSIS] AT SER-1406 AND SER-1512</scope>
    <scope>IDENTIFICATION BY MASS SPECTROMETRY [LARGE SCALE ANALYSIS]</scope>
    <source>
        <tissue>Liver</tissue>
    </source>
</reference>
<reference key="20">
    <citation type="journal article" date="2015" name="Clin. Genet.">
        <title>Biallelic HERC1 mutations in a syndromic form of overgrowth and intellectual disability.</title>
        <authorList>
            <person name="Ortega-Recalde O."/>
            <person name="Beltran O.I."/>
            <person name="Galvez J.M."/>
            <person name="Palma-Montero A."/>
            <person name="Restrepo C.M."/>
            <person name="Mateus H.E."/>
            <person name="Laissue P."/>
        </authorList>
    </citation>
    <scope>INVOLVEMENT IN MDFPMR</scope>
    <scope>VARIANT MDFPMR GLU-4520</scope>
</reference>
<reference key="21">
    <citation type="journal article" date="2019" name="Mol. Psychiatry">
        <title>A set of regulatory genes co-expressed in embryonic human brain is implicated in disrupted speech development.</title>
        <authorList>
            <person name="Eising E."/>
            <person name="Carrion-Castillo A."/>
            <person name="Vino A."/>
            <person name="Strand E.A."/>
            <person name="Jakielski K.J."/>
            <person name="Scerri T.S."/>
            <person name="Hildebrand M.S."/>
            <person name="Webster R."/>
            <person name="Ma A."/>
            <person name="Mazoyer B."/>
            <person name="Francks C."/>
            <person name="Bahlo M."/>
            <person name="Scheffer I.E."/>
            <person name="Morgan A.T."/>
            <person name="Shriberg L.D."/>
            <person name="Fisher S.E."/>
        </authorList>
    </citation>
    <scope>VARIANT ASN-3485</scope>
</reference>
<sequence>MATMIPPVKLKWLEHLNSSWITEDSESIATREGVAVLYSKLVSNKEVVPLPQQVLCLKGPQLPDFERESLSSDEQDHYLDALLSSQLALAKMVCSDSPFAGALRKRLLVLQRVFYALSNKYHDKGKVKQQQHSPESSSGSADVHSVSERPRSSTDALIEMGVRTGLSLLFALLRQSWMMPVSGPGLSLCNDVIHTAIEVVSSLPPLSLANESKIPPMGLDCLSQVTTFLKGVTIPNSGADTLGRRLASELLLGLAAQRGSLRYLLEWIEMALGASAVVHTMEKGKLLSSQEGMISFDCFMTILMQMRRSLGSSADRSQWREPTRTSDGLCSLYEAALCLFEEVCRMASDYSRTCASPDSIQTGDAPIVSETCEVYVWGSNSSHQLVEGTQEKILQPKLAPSFSDAQTIEAGQYCTFVISTDGSVRACGKGSYGRLGLGDSNNQSTLKKLTFEPHRSIKKVSSSKGSDGHTLAFTTEGEVFSWGDGDYGKLGHGNSSTQKYPKLIQGPLQGKVVVCVSAGYRHSAAVTEDGELYTWGEGDFGRLGHGDSNSRNIPTLVKDISNVGEVSCGSSHTIALSKDGRTVWSFGGGDNGKLGHGDTNRVYKPKVIEALQGMFIRKVCAGSQSSLALTSTGQVYAWGCGACLGCGSSEATALRPKLIEELAATRIVDVSIGDSHCLALSHDNEVYAWGNNSMGQCGQGNSTGPITKPKKVSGLDGIAIQQISAGTSHSLAWTALPRDRQVVAWHRPYCVDLEESTFSHLRSFLERYCDKINSEIPPLPFPSSREHHSFLKLCLKLLSNHLALALAGGVATSILGRQAGPLRNLLFRLMDSTVPDEIQEVVIETLSVGATMLLPPLRERMELLHSLLPQGPDRWESLSKGQRMQLDIILTSLQDHTHVASLLGYSSPSDAADLSSVCTGYGNLSDQPYGTQSCHPDTHLAEILMKTLLRNLGFYTDQAFGELEKNSDKFLLGTSSSENSQPAHLHELLCSLQKQLLAFCHINNISENSSSVALLHKHLQLLLPHATDIYSRSANLLKESPWNGSVGEKLRDVIYVSAAGSMLCQIVNSLLLLPVSVARPLLSYLLDLLPPLDCLNRLLPAADLLEDQELQWPLHGGPELIDPAGLPLPQPAQSWVWLVDLERTIALLIGRCLGGMLQGSPVSPEEQDTAYWMKTPLFSDGVEMDTPQLDKCMSCLLEVALSGNEEQKPFDYKLRPEIAVYVDLALGCSKEPARSLWISMQDYAVSKDWDSATLSNESLLDTVSRFVLAALLKHTNLLSQACGESRYQPGKHLSEVYRCVYKVRSRLLACKNLELIQTRSSSRDRWISENQDSADVDPQEHSFTRTIDEEAEMEEQAERDREEGHPEPEDEEEEREHEVMTAGKIFQCFLSAREVARSRDRDRMNSGAGSGARADDPPPQSQQERRVSTDLPEGQDVYTAACNSVIHRCALLILGVSPVIDELQKRREEGQLQQPSTSASEGGGLMTRSESLTAESRLVHTSPNYRLIKSRSESDLSQPESDEEGYALSGRRNVDLDLAASHRKRGPMHSQLESLSDSWARLKHSRDWLCNSSYSFESDFDLTKSLGVHTLIENVVSFVSGDVGNAPGFKEPEESMSTSPQASIIAMEQQQLRAELRLEALHQILVLLSGMEEKGSISLAGSRLSSGFQSSTLLTSVRLQFLAGCFGLGTVGHTGGKGESGRLHHYQDGIRAAKRNIQIEIQVAVHKIYQQLSATLERALQANKHHIEAQQRLLLVTVFALSVHYQPVDVSLAISTGLLNVLSQLCGTDTMLGQPLQLLPKTGVSQLSTALKVASTRLLQILAITTGTYADKLSPKVVQSLLDLLCSQLKNLLSQTGVLHMASFGEGEQEDGEEEEKKVDSSGETEKKDFRAALRKQHAAELHLGDFLVFLRRVVSSKAIQSKMASPKWTEVLLNIASQKCSSGIPLVGNLRTRLLALHVLEAVLPACESGVEDDQMAQIVERLFSLLSDCMWETPIAQAKHAIQIKEKEQEIKLQKQGELEEEDENLPIQEVSFDPEKAQCCLVENGQILTHGSGGKGYGLASTGVTSGCYQWKFYIVKENRGNEGTCVGVSRWPVHDFNHRTTSDMWLYRAYSGNLYHNGEQTLTLSSFTQGDFITCVLDMEARTISFGKNGEEPKLAFEDVDAAELYPCVMFYSSNPGEKVKICDMQMRGTPRDLLPGDPICSPVAAVLAEATIQLIRILHRTDRWTYCINKKMMERLHKIKICIKESGQKLKKSRSVQSREENEMREEKESKEEEKGKHTRHGLADLSELQLRTLCIEVWPVLAVIGGVDAGLRVGGRCVHKQTGRHATLLGVVKEGSTSAKVQWDEAEITISFPTFWSPSDTPLYNLEPCEPLPFDVARFRGLTASVLLDLTYLTGVHEDMGKQSTKRHEKKHRHESEEKGDVEQKPESESALDMRTGLTSDDVKSQSTTSSKSENEIASFSLDPTLPSVESQHQITEGKRKNHEHMSKNHDVAQSEIRAVQLSYLYLGAMKSLSALLGCSKYAELLLIPKVLAENGHNSDCASSPVVHEDVEMRAALQFLMRHMVKRAVMRSPIKRALGLADLERAQAMIYKLVVHGLLEDQFGGKIKQEIDQQAEESDPAQQAQTPVTTSPSASSTTSFMSSSLEDTTTATTPVTDTETVPASESPGVMPLSLLRQMFSSYPTTTVLPTRRAQTPPISSLPTSPSDEVGRRQSLTSPDSQSARPANRTALSDPSSRLSTSPPPPAIAVPLLEMGFSLRQIAKAMEATGARGEADAQNITVLAMWMIEHPGHEDEEEPQSGSTADSRPGAAVLGSGGKSNDPCYLQSPGDIPSADAAEMEEGFSESPDNLDHTENAASGSGPSARGRSAVTRRHKFDLAARTLLARAAGLYRSVQAHRNQSRREGISLQQDPGALYDFNLDEELEIDLDDEAMEAMFGQDLTSDNDILGMWIPEVLDWPTWHVCESEDREEVVVCELCECSVVSFNQHMKRNHPGCGRSANRQGYRSNGSYVDGWFGGECGSGNPYYLLCGTCREKYLAMKTKSKSTSSERYKGQAPDLIGKQDSVYEEDWDMLDVDEDEKLTGEEEFELLAGPLGLNDRRIVPEPVQFPDSDPLGASVAMVTATNSMEETLMQIGCHGSVEKSSSGRITLGEQAAALANPHDRVVALRRVTAAAQVLLARTMVMRALSLLSVSGSSCSLAAGLESLGLTDIRTLVRLMCLAAAGRAGLSTSPSAMASTSERSRGGHSKANKPISCLAYLSTAVGCLASNAPSAAKLLVQLCTQNLISAATGVNLTTVDDSIQRKFLPSFLRGIAEENKLVTSPNFVVTQALVALLADKGAKLRPNYDKSEVEKKGPLELANALAACCLSSRLSSQHRQWAAQQLVRTLAAHDRDNQTTLQTLADMGGDLRKCSFIKLEAHQNRVMTCVWCNKKGLLATSGNDGTIRVWNVTKKQYSLQQTCVFNRLEGDAEESLGSPSDPSFSPVSWSISGKYLAGALEKMVNIWQVNGGKGLVDIQPHWVSALAWPEEGPATAWSGESPELLLVGRMDGSLGLIEVVDVSTMHRRELEHCYRKDVSVTCIAWFSEDRPFAVGYFDGKLLLGTKEPLEKGGIVLIDAHKDTLISMKWDPTGHILMTCAKEDSVKLWGSISGCWCCLHSLCHPSIVNGIAWCRLPGKGSKLQLLMATGCQSGLVCVWRIPQDTTQTNVTSAEGWWEQESNCQDGYRKSSGAKCVYQLRGHITPVRTVAFSSDGLALVSGGLGGLMNIWSLRDGSVLQTVVIGSGAIQTTVWIPEVGVAACSNRSKDVLVVNCTAEWAAANHVLATCRTALKQQGVLGLNMAPCMRAFLERLPMMLQEQYAYEKPHVVCGDQLVHSPYMQCLASLAVGLHLDQLLCNPPVPPHHQNCLPDPASWNPNEWAWLECFSTTIKAAEALTNGAQFPESFTVPDLEPVPEDELVFLMDNSKWINGMDEQIMSWATSRPEDWHLGGKCDVYLWGAGRHGQLAEAGRNVMVPAAAPSFSQAQQVICGQNCTFVIQANGTVLACGEGSYGRLGQGNSDDLHVLTVISALQGFVVTQLVTSCGSDGHSMALTESGEVFSWGDGDYGKLGHGNSDRQRRPRQIEALQGEEVVQMSCGFKHSAVVTSDGKLFTFGNGDYGRLGLGNTSNKKLPERVTALEGYQIGQVACGLNHTLAVSADGSMVWAFGDGDYGKLGLGNSTAKSSPQKIDVLCGIGIKKVACGTQFSVALTKDGHVYTFGQDRLIGLPEGRARNHNRPQQIPVLAGVIIEDVAVGAEHTLALASNGDVYAWGSNSEGQLGLGHTNHVREPTLVTGLQGKNVRQISAGRCHSAAWTAPPVPPRAPGVSVPLQLGLPDTVPPQYGALREVSIHTVRARLRLLYHFSDLMYSSWRLLNLSPNNQNSTSHYNAGTWGIVQGQLRPLLAPRVYTLPMVRSIGKTMVQGKNYGPQITVKRISTRGRKCKPIFVQIARQVVKLNASDLRLPSRAWKVKLVGEGADDAGGVFDDTITEMCQELETGIVDLLIPSPNATAEVGYNRDRFLFNPSACLDEHLMQFKFLGILMGVAIRTKKPLDLHLAPLVWKQLCCVPLTLEDLEEVDLLYVQTLNSILHIEDSGITEESFHEMIPLDSFVGQSADGKMVPIIPGGNSIPLTFSNRKEYVERAIEYRLHEMDRQVAAVREGMSWIVPVPLLSLLTAKQLEQMVCGMPEISVEVLKKVVRYREVDEQHQLVQWFWHTLEEFSNEERVLFMRFVSGRSRLPANTADISQRFQIMKVDRPYDSLPTSQTCFFQLRLPPYSSQLVMAERLRYAINNCRSIDMDNYMLSRNVDNAEGSDTDY</sequence>
<gene>
    <name type="primary">HERC1</name>
</gene>
<accession>Q15751</accession>
<accession>Q8IW65</accession>
<keyword id="KW-0002">3D-structure</keyword>
<keyword id="KW-0963">Cytoplasm</keyword>
<keyword id="KW-0225">Disease variant</keyword>
<keyword id="KW-0333">Golgi apparatus</keyword>
<keyword id="KW-0344">Guanine-nucleotide releasing factor</keyword>
<keyword id="KW-0991">Intellectual disability</keyword>
<keyword id="KW-0472">Membrane</keyword>
<keyword id="KW-0597">Phosphoprotein</keyword>
<keyword id="KW-1267">Proteomics identification</keyword>
<keyword id="KW-1185">Reference proteome</keyword>
<keyword id="KW-0677">Repeat</keyword>
<keyword id="KW-0808">Transferase</keyword>
<keyword id="KW-0813">Transport</keyword>
<keyword id="KW-0833">Ubl conjugation pathway</keyword>
<keyword id="KW-0853">WD repeat</keyword>
<proteinExistence type="evidence at protein level"/>
<organism>
    <name type="scientific">Homo sapiens</name>
    <name type="common">Human</name>
    <dbReference type="NCBI Taxonomy" id="9606"/>
    <lineage>
        <taxon>Eukaryota</taxon>
        <taxon>Metazoa</taxon>
        <taxon>Chordata</taxon>
        <taxon>Craniata</taxon>
        <taxon>Vertebrata</taxon>
        <taxon>Euteleostomi</taxon>
        <taxon>Mammalia</taxon>
        <taxon>Eutheria</taxon>
        <taxon>Euarchontoglires</taxon>
        <taxon>Primates</taxon>
        <taxon>Haplorrhini</taxon>
        <taxon>Catarrhini</taxon>
        <taxon>Hominidae</taxon>
        <taxon>Homo</taxon>
    </lineage>
</organism>
<dbReference type="EC" id="2.3.2.26"/>
<dbReference type="EMBL" id="U50078">
    <property type="protein sequence ID" value="AAD12586.1"/>
    <property type="molecule type" value="mRNA"/>
</dbReference>
<dbReference type="EMBL" id="AC073167">
    <property type="status" value="NOT_ANNOTATED_CDS"/>
    <property type="molecule type" value="Genomic_DNA"/>
</dbReference>
<dbReference type="EMBL" id="AC118274">
    <property type="status" value="NOT_ANNOTATED_CDS"/>
    <property type="molecule type" value="Genomic_DNA"/>
</dbReference>
<dbReference type="EMBL" id="BC040929">
    <property type="protein sequence ID" value="AAH40929.1"/>
    <property type="molecule type" value="mRNA"/>
</dbReference>
<dbReference type="CCDS" id="CCDS45277.1"/>
<dbReference type="PIR" id="S71752">
    <property type="entry name" value="S71752"/>
</dbReference>
<dbReference type="RefSeq" id="NP_003913.3">
    <property type="nucleotide sequence ID" value="NM_003922.4"/>
</dbReference>
<dbReference type="PDB" id="4O2W">
    <property type="method" value="X-ray"/>
    <property type="resolution" value="2.00 A"/>
    <property type="chains" value="A/B/C/D=3975-4360"/>
</dbReference>
<dbReference type="PDB" id="4QT6">
    <property type="method" value="X-ray"/>
    <property type="resolution" value="1.64 A"/>
    <property type="chains" value="A=2035-2192"/>
</dbReference>
<dbReference type="PDBsum" id="4O2W"/>
<dbReference type="PDBsum" id="4QT6"/>
<dbReference type="SMR" id="Q15751"/>
<dbReference type="BioGRID" id="114439">
    <property type="interactions" value="174"/>
</dbReference>
<dbReference type="CORUM" id="Q15751"/>
<dbReference type="FunCoup" id="Q15751">
    <property type="interactions" value="1039"/>
</dbReference>
<dbReference type="IntAct" id="Q15751">
    <property type="interactions" value="92"/>
</dbReference>
<dbReference type="MINT" id="Q15751"/>
<dbReference type="STRING" id="9606.ENSP00000390158"/>
<dbReference type="GlyGen" id="Q15751">
    <property type="glycosylation" value="7 sites, 1 N-linked glycan (1 site), 1 O-linked glycan (5 sites)"/>
</dbReference>
<dbReference type="iPTMnet" id="Q15751"/>
<dbReference type="MetOSite" id="Q15751"/>
<dbReference type="PhosphoSitePlus" id="Q15751"/>
<dbReference type="SwissPalm" id="Q15751"/>
<dbReference type="BioMuta" id="HERC1"/>
<dbReference type="DMDM" id="296434522"/>
<dbReference type="jPOST" id="Q15751"/>
<dbReference type="MassIVE" id="Q15751"/>
<dbReference type="PaxDb" id="9606-ENSP00000390158"/>
<dbReference type="PeptideAtlas" id="Q15751"/>
<dbReference type="ProteomicsDB" id="60743"/>
<dbReference type="Pumba" id="Q15751"/>
<dbReference type="Antibodypedia" id="25716">
    <property type="antibodies" value="53 antibodies from 10 providers"/>
</dbReference>
<dbReference type="DNASU" id="8925"/>
<dbReference type="Ensembl" id="ENST00000443617.7">
    <property type="protein sequence ID" value="ENSP00000390158.2"/>
    <property type="gene ID" value="ENSG00000103657.14"/>
</dbReference>
<dbReference type="GeneID" id="8925"/>
<dbReference type="KEGG" id="hsa:8925"/>
<dbReference type="MANE-Select" id="ENST00000443617.7">
    <property type="protein sequence ID" value="ENSP00000390158.2"/>
    <property type="RefSeq nucleotide sequence ID" value="NM_003922.4"/>
    <property type="RefSeq protein sequence ID" value="NP_003913.3"/>
</dbReference>
<dbReference type="UCSC" id="uc002amp.4">
    <property type="organism name" value="human"/>
</dbReference>
<dbReference type="AGR" id="HGNC:4867"/>
<dbReference type="CTD" id="8925"/>
<dbReference type="DisGeNET" id="8925"/>
<dbReference type="GeneCards" id="HERC1"/>
<dbReference type="HGNC" id="HGNC:4867">
    <property type="gene designation" value="HERC1"/>
</dbReference>
<dbReference type="HPA" id="ENSG00000103657">
    <property type="expression patterns" value="Low tissue specificity"/>
</dbReference>
<dbReference type="MalaCards" id="HERC1"/>
<dbReference type="MIM" id="605109">
    <property type="type" value="gene"/>
</dbReference>
<dbReference type="MIM" id="617011">
    <property type="type" value="phenotype"/>
</dbReference>
<dbReference type="neXtProt" id="NX_Q15751"/>
<dbReference type="OpenTargets" id="ENSG00000103657"/>
<dbReference type="Orphanet" id="457359">
    <property type="disease" value="Megalencephaly-severe kyphoscoliosis-overgrowth syndrome"/>
</dbReference>
<dbReference type="PharmGKB" id="PA29242"/>
<dbReference type="VEuPathDB" id="HostDB:ENSG00000103657"/>
<dbReference type="eggNOG" id="KOG1426">
    <property type="taxonomic scope" value="Eukaryota"/>
</dbReference>
<dbReference type="GeneTree" id="ENSGT00940000155907"/>
<dbReference type="HOGENOM" id="CLU_000091_0_0_1"/>
<dbReference type="InParanoid" id="Q15751"/>
<dbReference type="OMA" id="LAICCQN"/>
<dbReference type="OrthoDB" id="239701at2759"/>
<dbReference type="PAN-GO" id="Q15751">
    <property type="GO annotations" value="0 GO annotations based on evolutionary models"/>
</dbReference>
<dbReference type="PhylomeDB" id="Q15751"/>
<dbReference type="TreeFam" id="TF106426"/>
<dbReference type="PathwayCommons" id="Q15751"/>
<dbReference type="Reactome" id="R-HSA-983168">
    <property type="pathway name" value="Antigen processing: Ubiquitination &amp; Proteasome degradation"/>
</dbReference>
<dbReference type="SignaLink" id="Q15751"/>
<dbReference type="SIGNOR" id="Q15751"/>
<dbReference type="UniPathway" id="UPA00143"/>
<dbReference type="BioGRID-ORCS" id="8925">
    <property type="hits" value="30 hits in 1204 CRISPR screens"/>
</dbReference>
<dbReference type="ChiTaRS" id="HERC1">
    <property type="organism name" value="human"/>
</dbReference>
<dbReference type="EvolutionaryTrace" id="Q15751"/>
<dbReference type="GeneWiki" id="HERC1"/>
<dbReference type="GenomeRNAi" id="8925"/>
<dbReference type="Pharos" id="Q15751">
    <property type="development level" value="Tbio"/>
</dbReference>
<dbReference type="PRO" id="PR:Q15751"/>
<dbReference type="Proteomes" id="UP000005640">
    <property type="component" value="Chromosome 15"/>
</dbReference>
<dbReference type="RNAct" id="Q15751">
    <property type="molecule type" value="protein"/>
</dbReference>
<dbReference type="Bgee" id="ENSG00000103657">
    <property type="expression patterns" value="Expressed in cortical plate and 197 other cell types or tissues"/>
</dbReference>
<dbReference type="ExpressionAtlas" id="Q15751">
    <property type="expression patterns" value="baseline and differential"/>
</dbReference>
<dbReference type="GO" id="GO:0005737">
    <property type="term" value="C:cytoplasm"/>
    <property type="evidence" value="ECO:0000304"/>
    <property type="project" value="ProtInc"/>
</dbReference>
<dbReference type="GO" id="GO:0005829">
    <property type="term" value="C:cytosol"/>
    <property type="evidence" value="ECO:0007669"/>
    <property type="project" value="UniProtKB-SubCell"/>
</dbReference>
<dbReference type="GO" id="GO:0005794">
    <property type="term" value="C:Golgi apparatus"/>
    <property type="evidence" value="ECO:0000304"/>
    <property type="project" value="ProtInc"/>
</dbReference>
<dbReference type="GO" id="GO:0016020">
    <property type="term" value="C:membrane"/>
    <property type="evidence" value="ECO:0007669"/>
    <property type="project" value="UniProtKB-SubCell"/>
</dbReference>
<dbReference type="GO" id="GO:0005085">
    <property type="term" value="F:guanyl-nucleotide exchange factor activity"/>
    <property type="evidence" value="ECO:0000304"/>
    <property type="project" value="ProtInc"/>
</dbReference>
<dbReference type="GO" id="GO:0004842">
    <property type="term" value="F:ubiquitin-protein transferase activity"/>
    <property type="evidence" value="ECO:0007669"/>
    <property type="project" value="InterPro"/>
</dbReference>
<dbReference type="GO" id="GO:0006914">
    <property type="term" value="P:autophagy"/>
    <property type="evidence" value="ECO:0007669"/>
    <property type="project" value="Ensembl"/>
</dbReference>
<dbReference type="GO" id="GO:0030282">
    <property type="term" value="P:bone mineralization"/>
    <property type="evidence" value="ECO:0007669"/>
    <property type="project" value="Ensembl"/>
</dbReference>
<dbReference type="GO" id="GO:0046849">
    <property type="term" value="P:bone remodeling"/>
    <property type="evidence" value="ECO:0007669"/>
    <property type="project" value="Ensembl"/>
</dbReference>
<dbReference type="GO" id="GO:0021702">
    <property type="term" value="P:cerebellar Purkinje cell differentiation"/>
    <property type="evidence" value="ECO:0007669"/>
    <property type="project" value="Ensembl"/>
</dbReference>
<dbReference type="GO" id="GO:0022038">
    <property type="term" value="P:corpus callosum development"/>
    <property type="evidence" value="ECO:0007669"/>
    <property type="project" value="Ensembl"/>
</dbReference>
<dbReference type="GO" id="GO:0010467">
    <property type="term" value="P:gene expression"/>
    <property type="evidence" value="ECO:0007669"/>
    <property type="project" value="Ensembl"/>
</dbReference>
<dbReference type="GO" id="GO:0010507">
    <property type="term" value="P:negative regulation of autophagy"/>
    <property type="evidence" value="ECO:0007669"/>
    <property type="project" value="Ensembl"/>
</dbReference>
<dbReference type="GO" id="GO:0050885">
    <property type="term" value="P:neuromuscular process controlling balance"/>
    <property type="evidence" value="ECO:0007669"/>
    <property type="project" value="Ensembl"/>
</dbReference>
<dbReference type="GO" id="GO:0031175">
    <property type="term" value="P:neuron projection development"/>
    <property type="evidence" value="ECO:0007669"/>
    <property type="project" value="Ensembl"/>
</dbReference>
<dbReference type="GO" id="GO:0016567">
    <property type="term" value="P:protein ubiquitination"/>
    <property type="evidence" value="ECO:0007669"/>
    <property type="project" value="UniProtKB-UniPathway"/>
</dbReference>
<dbReference type="CDD" id="cd00078">
    <property type="entry name" value="HECTc"/>
    <property type="match status" value="1"/>
</dbReference>
<dbReference type="CDD" id="cd12881">
    <property type="entry name" value="SPRY_HERC1"/>
    <property type="match status" value="1"/>
</dbReference>
<dbReference type="CDD" id="cd14401">
    <property type="entry name" value="UBA_HERC1"/>
    <property type="match status" value="1"/>
</dbReference>
<dbReference type="FunFam" id="2.130.10.30:FF:000001">
    <property type="entry name" value="LOW QUALITY PROTEIN: probable E3 ubiquitin-protein ligase HERC1"/>
    <property type="match status" value="2"/>
</dbReference>
<dbReference type="FunFam" id="2.60.120.920:FF:000015">
    <property type="entry name" value="LOW QUALITY PROTEIN: probable E3 ubiquitin-protein ligase HERC1"/>
    <property type="match status" value="1"/>
</dbReference>
<dbReference type="FunFam" id="2.130.10.10:FF:000148">
    <property type="entry name" value="probable E3 ubiquitin-protein ligase HERC1 isoform X1"/>
    <property type="match status" value="1"/>
</dbReference>
<dbReference type="FunFam" id="3.30.2410.10:FF:000006">
    <property type="entry name" value="probable E3 ubiquitin-protein ligase HERC1 isoform X2"/>
    <property type="match status" value="1"/>
</dbReference>
<dbReference type="Gene3D" id="2.60.120.920">
    <property type="match status" value="1"/>
</dbReference>
<dbReference type="Gene3D" id="3.30.2160.10">
    <property type="entry name" value="Hect, E3 ligase catalytic domain"/>
    <property type="match status" value="1"/>
</dbReference>
<dbReference type="Gene3D" id="3.30.2410.10">
    <property type="entry name" value="Hect, E3 ligase catalytic domain"/>
    <property type="match status" value="1"/>
</dbReference>
<dbReference type="Gene3D" id="3.90.1750.10">
    <property type="entry name" value="Hect, E3 ligase catalytic domains"/>
    <property type="match status" value="1"/>
</dbReference>
<dbReference type="Gene3D" id="2.130.10.30">
    <property type="entry name" value="Regulator of chromosome condensation 1/beta-lactamase-inhibitor protein II"/>
    <property type="match status" value="2"/>
</dbReference>
<dbReference type="Gene3D" id="2.130.10.10">
    <property type="entry name" value="YVTN repeat-like/Quinoprotein amine dehydrogenase"/>
    <property type="match status" value="1"/>
</dbReference>
<dbReference type="InterPro" id="IPR001870">
    <property type="entry name" value="B30.2/SPRY"/>
</dbReference>
<dbReference type="InterPro" id="IPR043136">
    <property type="entry name" value="B30.2/SPRY_sf"/>
</dbReference>
<dbReference type="InterPro" id="IPR013320">
    <property type="entry name" value="ConA-like_dom_sf"/>
</dbReference>
<dbReference type="InterPro" id="IPR000569">
    <property type="entry name" value="HECT_dom"/>
</dbReference>
<dbReference type="InterPro" id="IPR035983">
    <property type="entry name" value="Hect_E3_ubiquitin_ligase"/>
</dbReference>
<dbReference type="InterPro" id="IPR009091">
    <property type="entry name" value="RCC1/BLIP-II"/>
</dbReference>
<dbReference type="InterPro" id="IPR000408">
    <property type="entry name" value="Reg_chr_condens"/>
</dbReference>
<dbReference type="InterPro" id="IPR051625">
    <property type="entry name" value="Signaling_Regulatory_Domain"/>
</dbReference>
<dbReference type="InterPro" id="IPR003877">
    <property type="entry name" value="SPRY_dom"/>
</dbReference>
<dbReference type="InterPro" id="IPR035768">
    <property type="entry name" value="SPRY_HERC1"/>
</dbReference>
<dbReference type="InterPro" id="IPR015943">
    <property type="entry name" value="WD40/YVTN_repeat-like_dom_sf"/>
</dbReference>
<dbReference type="InterPro" id="IPR019775">
    <property type="entry name" value="WD40_repeat_CS"/>
</dbReference>
<dbReference type="InterPro" id="IPR036322">
    <property type="entry name" value="WD40_repeat_dom_sf"/>
</dbReference>
<dbReference type="InterPro" id="IPR001680">
    <property type="entry name" value="WD40_rpt"/>
</dbReference>
<dbReference type="PANTHER" id="PTHR22872">
    <property type="entry name" value="BTK-BINDING PROTEIN-RELATED"/>
    <property type="match status" value="1"/>
</dbReference>
<dbReference type="PANTHER" id="PTHR22872:SF6">
    <property type="entry name" value="E3 UBIQUITIN-PROTEIN LIGASE HERC1-RELATED"/>
    <property type="match status" value="1"/>
</dbReference>
<dbReference type="Pfam" id="PF00632">
    <property type="entry name" value="HECT"/>
    <property type="match status" value="1"/>
</dbReference>
<dbReference type="Pfam" id="PF00415">
    <property type="entry name" value="RCC1"/>
    <property type="match status" value="3"/>
</dbReference>
<dbReference type="Pfam" id="PF00622">
    <property type="entry name" value="SPRY"/>
    <property type="match status" value="1"/>
</dbReference>
<dbReference type="Pfam" id="PF00400">
    <property type="entry name" value="WD40"/>
    <property type="match status" value="3"/>
</dbReference>
<dbReference type="Pfam" id="PF25390">
    <property type="entry name" value="WD40_RLD"/>
    <property type="match status" value="2"/>
</dbReference>
<dbReference type="PRINTS" id="PR00633">
    <property type="entry name" value="RCCNDNSATION"/>
</dbReference>
<dbReference type="SMART" id="SM00119">
    <property type="entry name" value="HECTc"/>
    <property type="match status" value="1"/>
</dbReference>
<dbReference type="SMART" id="SM00449">
    <property type="entry name" value="SPRY"/>
    <property type="match status" value="1"/>
</dbReference>
<dbReference type="SMART" id="SM00320">
    <property type="entry name" value="WD40"/>
    <property type="match status" value="5"/>
</dbReference>
<dbReference type="SUPFAM" id="SSF49899">
    <property type="entry name" value="Concanavalin A-like lectins/glucanases"/>
    <property type="match status" value="1"/>
</dbReference>
<dbReference type="SUPFAM" id="SSF56204">
    <property type="entry name" value="Hect, E3 ligase catalytic domain"/>
    <property type="match status" value="1"/>
</dbReference>
<dbReference type="SUPFAM" id="SSF50985">
    <property type="entry name" value="RCC1/BLIP-II"/>
    <property type="match status" value="2"/>
</dbReference>
<dbReference type="SUPFAM" id="SSF50978">
    <property type="entry name" value="WD40 repeat-like"/>
    <property type="match status" value="2"/>
</dbReference>
<dbReference type="PROSITE" id="PS50188">
    <property type="entry name" value="B302_SPRY"/>
    <property type="match status" value="1"/>
</dbReference>
<dbReference type="PROSITE" id="PS50237">
    <property type="entry name" value="HECT"/>
    <property type="match status" value="1"/>
</dbReference>
<dbReference type="PROSITE" id="PS00626">
    <property type="entry name" value="RCC1_2"/>
    <property type="match status" value="4"/>
</dbReference>
<dbReference type="PROSITE" id="PS50012">
    <property type="entry name" value="RCC1_3"/>
    <property type="match status" value="14"/>
</dbReference>
<dbReference type="PROSITE" id="PS00678">
    <property type="entry name" value="WD_REPEATS_1"/>
    <property type="match status" value="1"/>
</dbReference>
<dbReference type="PROSITE" id="PS50082">
    <property type="entry name" value="WD_REPEATS_2"/>
    <property type="match status" value="3"/>
</dbReference>
<dbReference type="PROSITE" id="PS50294">
    <property type="entry name" value="WD_REPEATS_REGION"/>
    <property type="match status" value="1"/>
</dbReference>
<evidence type="ECO:0000255" key="1">
    <source>
        <dbReference type="PROSITE-ProRule" id="PRU00104"/>
    </source>
</evidence>
<evidence type="ECO:0000255" key="2">
    <source>
        <dbReference type="PROSITE-ProRule" id="PRU00548"/>
    </source>
</evidence>
<evidence type="ECO:0000256" key="3">
    <source>
        <dbReference type="SAM" id="MobiDB-lite"/>
    </source>
</evidence>
<evidence type="ECO:0000269" key="4">
    <source>
    </source>
</evidence>
<evidence type="ECO:0000269" key="5">
    <source>
    </source>
</evidence>
<evidence type="ECO:0000269" key="6">
    <source>
    </source>
</evidence>
<evidence type="ECO:0000269" key="7">
    <source>
    </source>
</evidence>
<evidence type="ECO:0000269" key="8">
    <source>
    </source>
</evidence>
<evidence type="ECO:0000269" key="9">
    <source>
    </source>
</evidence>
<evidence type="ECO:0000269" key="10">
    <source>
    </source>
</evidence>
<evidence type="ECO:0000305" key="11"/>
<evidence type="ECO:0007744" key="12">
    <source>
    </source>
</evidence>
<evidence type="ECO:0007744" key="13">
    <source>
    </source>
</evidence>
<evidence type="ECO:0007744" key="14">
    <source>
    </source>
</evidence>
<evidence type="ECO:0007744" key="15">
    <source>
    </source>
</evidence>
<evidence type="ECO:0007744" key="16">
    <source>
    </source>
</evidence>
<evidence type="ECO:0007744" key="17">
    <source>
    </source>
</evidence>
<evidence type="ECO:0007744" key="18">
    <source>
    </source>
</evidence>
<evidence type="ECO:0007744" key="19">
    <source>
    </source>
</evidence>
<evidence type="ECO:0007829" key="20">
    <source>
        <dbReference type="PDB" id="4O2W"/>
    </source>
</evidence>
<evidence type="ECO:0007829" key="21">
    <source>
        <dbReference type="PDB" id="4QT6"/>
    </source>
</evidence>
<name>HERC1_HUMAN</name>
<comment type="function">
    <text evidence="5 9 10">Involved in membrane trafficking via some guanine nucleotide exchange factor (GEF) activity and its ability to bind clathrin. Acts as a GEF for Arf and Rab, by exchanging bound GDP for free GTP. Binds phosphatidylinositol 4,5-bisphosphate, which is required for GEF activity. May also act as a E3 ubiquitin-protein ligase which accepts ubiquitin from an E2 ubiquitin-conjugating enzyme in the form of a thioester and then directly transfers the ubiquitin to targeted substrates.</text>
</comment>
<comment type="catalytic activity">
    <reaction>
        <text>S-ubiquitinyl-[E2 ubiquitin-conjugating enzyme]-L-cysteine + [acceptor protein]-L-lysine = [E2 ubiquitin-conjugating enzyme]-L-cysteine + N(6)-ubiquitinyl-[acceptor protein]-L-lysine.</text>
        <dbReference type="EC" id="2.3.2.26"/>
    </reaction>
</comment>
<comment type="pathway">
    <text>Protein modification; protein ubiquitination.</text>
</comment>
<comment type="subunit">
    <text evidence="4 5 6 9 10">Interacts with TSC2; interaction is inhibited by TSC1. Interacts with PKM, ARF1 and ARF6. Forms a ternary complex with clathrin heavy chain (CLTC) and HSPA1A.</text>
</comment>
<comment type="subcellular location">
    <subcellularLocation>
        <location>Membrane</location>
        <topology>Peripheral membrane protein</topology>
    </subcellularLocation>
    <subcellularLocation>
        <location>Cytoplasm</location>
        <location>Cytosol</location>
    </subcellularLocation>
    <subcellularLocation>
        <location>Golgi apparatus</location>
    </subcellularLocation>
    <text>Recruited onto actin-rich surface protrusions.</text>
</comment>
<comment type="tissue specificity">
    <text evidence="9">Widely expressed.</text>
</comment>
<comment type="disease" evidence="7">
    <disease id="DI-04773">
        <name>Macrocephaly, dysmorphic facies, and psychomotor retardation</name>
        <acronym>MDFPMR</acronym>
        <description>An autosomal recessive syndrome characterized by large head and somatic overgrowth, intellectual disability, and facial dysmorphism. Seizures, hypotonia and ataxic gait are observed in some patients.</description>
        <dbReference type="MIM" id="617011"/>
    </disease>
    <text>The disease is caused by variants affecting the gene represented in this entry.</text>
</comment>
<protein>
    <recommendedName>
        <fullName>Probable E3 ubiquitin-protein ligase HERC1</fullName>
        <ecNumber>2.3.2.26</ecNumber>
    </recommendedName>
    <alternativeName>
        <fullName>HECT domain and RCC1-like domain-containing protein 1</fullName>
    </alternativeName>
    <alternativeName>
        <fullName>HECT-type E3 ubiquitin transferase HERC1</fullName>
    </alternativeName>
    <alternativeName>
        <fullName>p532</fullName>
    </alternativeName>
    <alternativeName>
        <fullName>p619</fullName>
    </alternativeName>
</protein>
<feature type="chain" id="PRO_0000328871" description="Probable E3 ubiquitin-protein ligase HERC1">
    <location>
        <begin position="1"/>
        <end position="4861"/>
    </location>
</feature>
<feature type="repeat" description="RCC1 1">
    <location>
        <begin position="371"/>
        <end position="420"/>
    </location>
</feature>
<feature type="repeat" description="RCC1 2">
    <location>
        <begin position="421"/>
        <end position="475"/>
    </location>
</feature>
<feature type="repeat" description="RCC1 3">
    <location>
        <begin position="476"/>
        <end position="528"/>
    </location>
</feature>
<feature type="repeat" description="RCC1 4">
    <location>
        <begin position="529"/>
        <end position="578"/>
    </location>
</feature>
<feature type="repeat" description="RCC1 5">
    <location>
        <begin position="580"/>
        <end position="631"/>
    </location>
</feature>
<feature type="repeat" description="RCC1 6">
    <location>
        <begin position="633"/>
        <end position="682"/>
    </location>
</feature>
<feature type="repeat" description="RCC1 7">
    <location>
        <begin position="683"/>
        <end position="735"/>
    </location>
</feature>
<feature type="domain" description="B30.2/SPRY" evidence="2">
    <location>
        <begin position="2002"/>
        <end position="2193"/>
    </location>
</feature>
<feature type="repeat" description="WD 1">
    <location>
        <begin position="3426"/>
        <end position="3465"/>
    </location>
</feature>
<feature type="repeat" description="WD 2">
    <location>
        <begin position="3484"/>
        <end position="3522"/>
    </location>
</feature>
<feature type="repeat" description="WD 3">
    <location>
        <begin position="3524"/>
        <end position="3572"/>
    </location>
</feature>
<feature type="repeat" description="WD 4">
    <location>
        <begin position="3580"/>
        <end position="3619"/>
    </location>
</feature>
<feature type="repeat" description="WD 5">
    <location>
        <begin position="3624"/>
        <end position="3663"/>
    </location>
</feature>
<feature type="repeat" description="WD 6">
    <location>
        <begin position="3667"/>
        <end position="3713"/>
    </location>
</feature>
<feature type="repeat" description="WD 7">
    <location>
        <begin position="3745"/>
        <end position="3784"/>
    </location>
</feature>
<feature type="repeat" description="RCC1 8">
    <location>
        <begin position="3996"/>
        <end position="4044"/>
    </location>
</feature>
<feature type="repeat" description="RCC1 9">
    <location>
        <begin position="4046"/>
        <end position="4099"/>
    </location>
</feature>
<feature type="repeat" description="RCC1 10">
    <location>
        <begin position="4101"/>
        <end position="4151"/>
    </location>
</feature>
<feature type="repeat" description="RCC1 11">
    <location>
        <begin position="4153"/>
        <end position="4203"/>
    </location>
</feature>
<feature type="repeat" description="RCC1 12">
    <location>
        <begin position="4205"/>
        <end position="4256"/>
    </location>
</feature>
<feature type="repeat" description="RCC1 13">
    <location>
        <begin position="4258"/>
        <end position="4308"/>
    </location>
</feature>
<feature type="repeat" description="RCC1 14">
    <location>
        <begin position="4310"/>
        <end position="4360"/>
    </location>
</feature>
<feature type="domain" description="HECT" evidence="1">
    <location>
        <begin position="4501"/>
        <end position="4848"/>
    </location>
</feature>
<feature type="region of interest" description="Disordered" evidence="3">
    <location>
        <begin position="125"/>
        <end position="154"/>
    </location>
</feature>
<feature type="region of interest" description="Disordered" evidence="3">
    <location>
        <begin position="1322"/>
        <end position="1341"/>
    </location>
</feature>
<feature type="region of interest" description="Disordered" evidence="3">
    <location>
        <begin position="1348"/>
        <end position="1379"/>
    </location>
</feature>
<feature type="region of interest" description="Disordered" evidence="3">
    <location>
        <begin position="1397"/>
        <end position="1432"/>
    </location>
</feature>
<feature type="region of interest" description="Disordered" evidence="3">
    <location>
        <begin position="1503"/>
        <end position="1529"/>
    </location>
</feature>
<feature type="region of interest" description="Disordered" evidence="3">
    <location>
        <begin position="1864"/>
        <end position="1886"/>
    </location>
</feature>
<feature type="region of interest" description="Disordered" evidence="3">
    <location>
        <begin position="2257"/>
        <end position="2286"/>
    </location>
</feature>
<feature type="region of interest" description="Disordered" evidence="3">
    <location>
        <begin position="2406"/>
        <end position="2497"/>
    </location>
</feature>
<feature type="region of interest" description="Disordered" evidence="3">
    <location>
        <begin position="2617"/>
        <end position="2675"/>
    </location>
</feature>
<feature type="region of interest" description="Disordered" evidence="3">
    <location>
        <begin position="2692"/>
        <end position="2752"/>
    </location>
</feature>
<feature type="region of interest" description="Disordered" evidence="3">
    <location>
        <begin position="2798"/>
        <end position="2876"/>
    </location>
</feature>
<feature type="region of interest" description="Disordered" evidence="3">
    <location>
        <begin position="3236"/>
        <end position="3255"/>
    </location>
</feature>
<feature type="compositionally biased region" description="Basic and acidic residues" evidence="3">
    <location>
        <begin position="1356"/>
        <end position="1367"/>
    </location>
</feature>
<feature type="compositionally biased region" description="Basic and acidic residues" evidence="3">
    <location>
        <begin position="1875"/>
        <end position="1886"/>
    </location>
</feature>
<feature type="compositionally biased region" description="Basic and acidic residues" evidence="3">
    <location>
        <begin position="2262"/>
        <end position="2281"/>
    </location>
</feature>
<feature type="compositionally biased region" description="Basic residues" evidence="3">
    <location>
        <begin position="2410"/>
        <end position="2419"/>
    </location>
</feature>
<feature type="compositionally biased region" description="Basic and acidic residues" evidence="3">
    <location>
        <begin position="2420"/>
        <end position="2434"/>
    </location>
</feature>
<feature type="compositionally biased region" description="Polar residues" evidence="3">
    <location>
        <begin position="2451"/>
        <end position="2464"/>
    </location>
</feature>
<feature type="compositionally biased region" description="Basic and acidic residues" evidence="3">
    <location>
        <begin position="2482"/>
        <end position="2497"/>
    </location>
</feature>
<feature type="compositionally biased region" description="Low complexity" evidence="3">
    <location>
        <begin position="2635"/>
        <end position="2669"/>
    </location>
</feature>
<feature type="compositionally biased region" description="Low complexity" evidence="3">
    <location>
        <begin position="2701"/>
        <end position="2712"/>
    </location>
</feature>
<feature type="compositionally biased region" description="Polar residues" evidence="3">
    <location>
        <begin position="2719"/>
        <end position="2730"/>
    </location>
</feature>
<feature type="compositionally biased region" description="Low complexity" evidence="3">
    <location>
        <begin position="2862"/>
        <end position="2875"/>
    </location>
</feature>
<feature type="compositionally biased region" description="Polar residues" evidence="3">
    <location>
        <begin position="3236"/>
        <end position="3246"/>
    </location>
</feature>
<feature type="active site" description="Glycyl thioester intermediate" evidence="1">
    <location>
        <position position="4811"/>
    </location>
</feature>
<feature type="modified residue" description="Phosphoserine" evidence="18">
    <location>
        <position position="1342"/>
    </location>
</feature>
<feature type="modified residue" description="Phosphoserine" evidence="19">
    <location>
        <position position="1406"/>
    </location>
</feature>
<feature type="modified residue" description="Phosphoserine" evidence="18">
    <location>
        <position position="1428"/>
    </location>
</feature>
<feature type="modified residue" description="Phosphoserine" evidence="17">
    <location>
        <position position="1491"/>
    </location>
</feature>
<feature type="modified residue" description="Phosphoserine" evidence="18 19">
    <location>
        <position position="1512"/>
    </location>
</feature>
<feature type="modified residue" description="Phosphoserine" evidence="14">
    <location>
        <position position="1517"/>
    </location>
</feature>
<feature type="modified residue" description="Phosphoserine" evidence="12 14 15 18">
    <location>
        <position position="1521"/>
    </location>
</feature>
<feature type="modified residue" description="Phosphoserine" evidence="18">
    <location>
        <position position="2422"/>
    </location>
</feature>
<feature type="modified residue" description="Phosphothreonine" evidence="13 14 15 18">
    <location>
        <position position="2701"/>
    </location>
</feature>
<feature type="modified residue" description="Phosphoserine" evidence="14">
    <location>
        <position position="2706"/>
    </location>
</feature>
<feature type="modified residue" description="Phosphoserine" evidence="14">
    <location>
        <position position="2710"/>
    </location>
</feature>
<feature type="modified residue" description="Phosphoserine" evidence="18">
    <location>
        <position position="2720"/>
    </location>
</feature>
<feature type="modified residue" description="Phosphoserine" evidence="18">
    <location>
        <position position="2723"/>
    </location>
</feature>
<feature type="modified residue" description="Phosphoserine" evidence="16">
    <location>
        <position position="4857"/>
    </location>
</feature>
<feature type="sequence variant" id="VAR_042556" description="In dbSNP:rs1063423.">
    <original>L</original>
    <variation>F</variation>
    <location>
        <position position="1088"/>
    </location>
</feature>
<feature type="sequence variant" id="VAR_042557" description="In dbSNP:rs3764187.">
    <original>L</original>
    <variation>F</variation>
    <location>
        <position position="1278"/>
    </location>
</feature>
<feature type="sequence variant" id="VAR_042558" description="In dbSNP:rs36089909.">
    <original>G</original>
    <variation>V</variation>
    <location>
        <position position="1411"/>
    </location>
</feature>
<feature type="sequence variant" id="VAR_042559" description="In dbSNP:rs7162519.">
    <original>H</original>
    <variation>N</variation>
    <location>
        <position position="1447"/>
    </location>
</feature>
<feature type="sequence variant" id="VAR_042560" description="In dbSNP:rs16947363.">
    <original>S</original>
    <variation>A</variation>
    <location>
        <position position="1572"/>
    </location>
</feature>
<feature type="sequence variant" id="VAR_042561" description="In dbSNP:rs2255243." evidence="9">
    <original>G</original>
    <variation>A</variation>
    <location>
        <position position="1696"/>
    </location>
</feature>
<feature type="sequence variant" id="VAR_042562" description="In dbSNP:rs2228512.">
    <original>T</original>
    <variation>A</variation>
    <location>
        <position position="1995"/>
    </location>
</feature>
<feature type="sequence variant" id="VAR_042563" description="In dbSNP:rs2228510." evidence="9">
    <original>I</original>
    <variation>V</variation>
    <location>
        <position position="2220"/>
    </location>
</feature>
<feature type="sequence variant" id="VAR_042564" description="In dbSNP:rs35122568.">
    <original>A</original>
    <variation>T</variation>
    <location>
        <position position="2816"/>
    </location>
</feature>
<feature type="sequence variant" id="VAR_042565" description="In dbSNP:rs2228513.">
    <original>S</original>
    <variation>F</variation>
    <location>
        <position position="3152"/>
    </location>
</feature>
<feature type="sequence variant" id="VAR_081534" description="Found in a patient with childhood apraxia of speech; uncertain significance." evidence="8">
    <original>S</original>
    <variation>N</variation>
    <location>
        <position position="3485"/>
    </location>
</feature>
<feature type="sequence variant" id="VAR_042566" description="In dbSNP:rs7182782.">
    <original>G</original>
    <variation>R</variation>
    <location>
        <position position="3517"/>
    </location>
</feature>
<feature type="sequence variant" id="VAR_042567" description="In dbSNP:rs2229749." evidence="9">
    <original>E</original>
    <variation>D</variation>
    <location>
        <position position="3722"/>
    </location>
</feature>
<feature type="sequence variant" id="VAR_057122" description="In dbSNP:rs2228516.">
    <original>I</original>
    <variation>V</variation>
    <location>
        <position position="4394"/>
    </location>
</feature>
<feature type="sequence variant" id="VAR_076995" description="In MDFPMR; dbSNP:rs769677823." evidence="7">
    <original>G</original>
    <variation>E</variation>
    <location>
        <position position="4520"/>
    </location>
</feature>
<feature type="sequence conflict" description="In Ref. 1; AAD12586." evidence="11" ref="1">
    <original>R</original>
    <variation>Q</variation>
    <location>
        <position position="1532"/>
    </location>
</feature>
<feature type="strand" evidence="21">
    <location>
        <begin position="2035"/>
        <end position="2046"/>
    </location>
</feature>
<feature type="turn" evidence="21">
    <location>
        <begin position="2047"/>
        <end position="2049"/>
    </location>
</feature>
<feature type="strand" evidence="21">
    <location>
        <begin position="2050"/>
        <end position="2053"/>
    </location>
</feature>
<feature type="strand" evidence="21">
    <location>
        <begin position="2055"/>
        <end position="2065"/>
    </location>
</feature>
<feature type="strand" evidence="21">
    <location>
        <begin position="2069"/>
        <end position="2080"/>
    </location>
</feature>
<feature type="strand" evidence="21">
    <location>
        <begin position="2088"/>
        <end position="2093"/>
    </location>
</feature>
<feature type="turn" evidence="21">
    <location>
        <begin position="2102"/>
        <end position="2104"/>
    </location>
</feature>
<feature type="strand" evidence="21">
    <location>
        <begin position="2106"/>
        <end position="2112"/>
    </location>
</feature>
<feature type="turn" evidence="21">
    <location>
        <begin position="2113"/>
        <end position="2115"/>
    </location>
</feature>
<feature type="strand" evidence="21">
    <location>
        <begin position="2117"/>
        <end position="2127"/>
    </location>
</feature>
<feature type="strand" evidence="21">
    <location>
        <begin position="2136"/>
        <end position="2142"/>
    </location>
</feature>
<feature type="turn" evidence="21">
    <location>
        <begin position="2143"/>
        <end position="2146"/>
    </location>
</feature>
<feature type="strand" evidence="21">
    <location>
        <begin position="2147"/>
        <end position="2152"/>
    </location>
</feature>
<feature type="strand" evidence="21">
    <location>
        <begin position="2158"/>
        <end position="2161"/>
    </location>
</feature>
<feature type="strand" evidence="21">
    <location>
        <begin position="2167"/>
        <end position="2175"/>
    </location>
</feature>
<feature type="strand" evidence="21">
    <location>
        <begin position="2178"/>
        <end position="2180"/>
    </location>
</feature>
<feature type="strand" evidence="21">
    <location>
        <begin position="2183"/>
        <end position="2187"/>
    </location>
</feature>
<feature type="strand" evidence="20">
    <location>
        <begin position="3999"/>
        <end position="4004"/>
    </location>
</feature>
<feature type="helix" evidence="20">
    <location>
        <begin position="4011"/>
        <end position="4013"/>
    </location>
</feature>
<feature type="strand" evidence="20">
    <location>
        <begin position="4015"/>
        <end position="4022"/>
    </location>
</feature>
<feature type="helix" evidence="20">
    <location>
        <begin position="4024"/>
        <end position="4026"/>
    </location>
</feature>
<feature type="strand" evidence="20">
    <location>
        <begin position="4029"/>
        <end position="4034"/>
    </location>
</feature>
<feature type="strand" evidence="20">
    <location>
        <begin position="4036"/>
        <end position="4043"/>
    </location>
</feature>
<feature type="strand" evidence="20">
    <location>
        <begin position="4048"/>
        <end position="4052"/>
    </location>
</feature>
<feature type="helix" evidence="20">
    <location>
        <begin position="4055"/>
        <end position="4057"/>
    </location>
</feature>
<feature type="strand" evidence="20">
    <location>
        <begin position="4060"/>
        <end position="4063"/>
    </location>
</feature>
<feature type="strand" evidence="20">
    <location>
        <begin position="4067"/>
        <end position="4072"/>
    </location>
</feature>
<feature type="helix" evidence="20">
    <location>
        <begin position="4074"/>
        <end position="4076"/>
    </location>
</feature>
<feature type="strand" evidence="20">
    <location>
        <begin position="4081"/>
        <end position="4086"/>
    </location>
</feature>
<feature type="strand" evidence="20">
    <location>
        <begin position="4093"/>
        <end position="4098"/>
    </location>
</feature>
<feature type="strand" evidence="20">
    <location>
        <begin position="4103"/>
        <end position="4107"/>
    </location>
</feature>
<feature type="helix" evidence="20">
    <location>
        <begin position="4110"/>
        <end position="4112"/>
    </location>
</feature>
<feature type="strand" evidence="20">
    <location>
        <begin position="4116"/>
        <end position="4118"/>
    </location>
</feature>
<feature type="strand" evidence="20">
    <location>
        <begin position="4122"/>
        <end position="4127"/>
    </location>
</feature>
<feature type="helix" evidence="20">
    <location>
        <begin position="4129"/>
        <end position="4131"/>
    </location>
</feature>
<feature type="strand" evidence="20">
    <location>
        <begin position="4136"/>
        <end position="4141"/>
    </location>
</feature>
<feature type="strand" evidence="20">
    <location>
        <begin position="4143"/>
        <end position="4150"/>
    </location>
</feature>
<feature type="strand" evidence="20">
    <location>
        <begin position="4155"/>
        <end position="4159"/>
    </location>
</feature>
<feature type="helix" evidence="20">
    <location>
        <begin position="4162"/>
        <end position="4164"/>
    </location>
</feature>
<feature type="strand" evidence="20">
    <location>
        <begin position="4168"/>
        <end position="4170"/>
    </location>
</feature>
<feature type="strand" evidence="20">
    <location>
        <begin position="4174"/>
        <end position="4179"/>
    </location>
</feature>
<feature type="helix" evidence="20">
    <location>
        <begin position="4181"/>
        <end position="4183"/>
    </location>
</feature>
<feature type="strand" evidence="20">
    <location>
        <begin position="4188"/>
        <end position="4193"/>
    </location>
</feature>
<feature type="strand" evidence="20">
    <location>
        <begin position="4195"/>
        <end position="4202"/>
    </location>
</feature>
<feature type="strand" evidence="20">
    <location>
        <begin position="4208"/>
        <end position="4212"/>
    </location>
</feature>
<feature type="helix" evidence="20">
    <location>
        <begin position="4215"/>
        <end position="4217"/>
    </location>
</feature>
<feature type="strand" evidence="20">
    <location>
        <begin position="4221"/>
        <end position="4223"/>
    </location>
</feature>
<feature type="strand" evidence="20">
    <location>
        <begin position="4227"/>
        <end position="4232"/>
    </location>
</feature>
<feature type="helix" evidence="20">
    <location>
        <begin position="4234"/>
        <end position="4236"/>
    </location>
</feature>
<feature type="strand" evidence="20">
    <location>
        <begin position="4237"/>
        <end position="4239"/>
    </location>
</feature>
<feature type="strand" evidence="20">
    <location>
        <begin position="4241"/>
        <end position="4246"/>
    </location>
</feature>
<feature type="strand" evidence="20">
    <location>
        <begin position="4248"/>
        <end position="4255"/>
    </location>
</feature>
<feature type="strand" evidence="20">
    <location>
        <begin position="4260"/>
        <end position="4264"/>
    </location>
</feature>
<feature type="helix" evidence="20">
    <location>
        <begin position="4266"/>
        <end position="4268"/>
    </location>
</feature>
<feature type="helix" evidence="20">
    <location>
        <begin position="4273"/>
        <end position="4278"/>
    </location>
</feature>
<feature type="helix" evidence="20">
    <location>
        <begin position="4286"/>
        <end position="4288"/>
    </location>
</feature>
<feature type="strand" evidence="20">
    <location>
        <begin position="4293"/>
        <end position="4298"/>
    </location>
</feature>
<feature type="strand" evidence="20">
    <location>
        <begin position="4300"/>
        <end position="4307"/>
    </location>
</feature>
<feature type="strand" evidence="20">
    <location>
        <begin position="4312"/>
        <end position="4316"/>
    </location>
</feature>
<feature type="strand" evidence="20">
    <location>
        <begin position="4325"/>
        <end position="4327"/>
    </location>
</feature>
<feature type="strand" evidence="20">
    <location>
        <begin position="4331"/>
        <end position="4336"/>
    </location>
</feature>
<feature type="helix" evidence="20">
    <location>
        <begin position="4338"/>
        <end position="4340"/>
    </location>
</feature>
<feature type="strand" evidence="20">
    <location>
        <begin position="4347"/>
        <end position="4350"/>
    </location>
</feature>
<feature type="strand" evidence="20">
    <location>
        <begin position="4352"/>
        <end position="4358"/>
    </location>
</feature>